<proteinExistence type="evidence at transcript level"/>
<reference key="1">
    <citation type="submission" date="2004-11" db="EMBL/GenBank/DDBJ databases">
        <authorList>
            <consortium name="The German cDNA consortium"/>
        </authorList>
    </citation>
    <scope>NUCLEOTIDE SEQUENCE [LARGE SCALE MRNA]</scope>
    <source>
        <tissue>Kidney</tissue>
    </source>
</reference>
<sequence>MAEKVLVTGGAGYIGSHTVLELLEAGYLPVVIDNFHNAFRGGGSLPESLRRVQELTGRSVEFEEMDILDQGALQRLFKKHSFMAVIHFAGLKAVGESVQKPLDYYRVNLTGTIQLLEIMKAHGVKNLVFSSSATVYGNPQYLPLDEAHPTGGCTNPYGKSKFFIEEMIRDLCQADKTWNAVLLRYFNPTGAHASGCIGEDPQGIPNNLMPYVSQVAIGRREALNVFGNDYDTEDGTGVRDYIHVVDLAKGHIAALRKLKEQCGCRIYNLGTGTGYSVLQMVQAMEKASGKKIPYKVVARREGDVAACYANPSLAHEELGWTAALGLDRMCEDLWRWQKQNPSGFGTQA</sequence>
<accession>Q5R8D0</accession>
<dbReference type="EC" id="5.1.3.2" evidence="1"/>
<dbReference type="EC" id="5.1.3.7" evidence="1"/>
<dbReference type="EMBL" id="CR859823">
    <property type="protein sequence ID" value="CAH91980.1"/>
    <property type="molecule type" value="mRNA"/>
</dbReference>
<dbReference type="RefSeq" id="NP_001126148.1">
    <property type="nucleotide sequence ID" value="NM_001132676.1"/>
</dbReference>
<dbReference type="SMR" id="Q5R8D0"/>
<dbReference type="FunCoup" id="Q5R8D0">
    <property type="interactions" value="560"/>
</dbReference>
<dbReference type="STRING" id="9601.ENSPPYP00000002005"/>
<dbReference type="GeneID" id="100173107"/>
<dbReference type="KEGG" id="pon:100173107"/>
<dbReference type="CTD" id="2582"/>
<dbReference type="eggNOG" id="KOG1371">
    <property type="taxonomic scope" value="Eukaryota"/>
</dbReference>
<dbReference type="InParanoid" id="Q5R8D0"/>
<dbReference type="OrthoDB" id="9402762at2759"/>
<dbReference type="UniPathway" id="UPA00214"/>
<dbReference type="Proteomes" id="UP000001595">
    <property type="component" value="Unplaced"/>
</dbReference>
<dbReference type="GO" id="GO:0005829">
    <property type="term" value="C:cytosol"/>
    <property type="evidence" value="ECO:0007669"/>
    <property type="project" value="TreeGrafter"/>
</dbReference>
<dbReference type="GO" id="GO:0003978">
    <property type="term" value="F:UDP-glucose 4-epimerase activity"/>
    <property type="evidence" value="ECO:0007669"/>
    <property type="project" value="UniProtKB-EC"/>
</dbReference>
<dbReference type="GO" id="GO:0003974">
    <property type="term" value="F:UDP-N-acetylglucosamine 4-epimerase activity"/>
    <property type="evidence" value="ECO:0007669"/>
    <property type="project" value="UniProtKB-EC"/>
</dbReference>
<dbReference type="GO" id="GO:0033499">
    <property type="term" value="P:galactose catabolic process via UDP-galactose, Leloir pathway"/>
    <property type="evidence" value="ECO:0007669"/>
    <property type="project" value="TreeGrafter"/>
</dbReference>
<dbReference type="CDD" id="cd05247">
    <property type="entry name" value="UDP_G4E_1_SDR_e"/>
    <property type="match status" value="1"/>
</dbReference>
<dbReference type="Gene3D" id="3.40.50.720">
    <property type="entry name" value="NAD(P)-binding Rossmann-like Domain"/>
    <property type="match status" value="1"/>
</dbReference>
<dbReference type="Gene3D" id="3.90.25.10">
    <property type="entry name" value="UDP-galactose 4-epimerase, domain 1"/>
    <property type="match status" value="1"/>
</dbReference>
<dbReference type="InterPro" id="IPR016040">
    <property type="entry name" value="NAD(P)-bd_dom"/>
</dbReference>
<dbReference type="InterPro" id="IPR036291">
    <property type="entry name" value="NAD(P)-bd_dom_sf"/>
</dbReference>
<dbReference type="InterPro" id="IPR005886">
    <property type="entry name" value="UDP_G4E"/>
</dbReference>
<dbReference type="NCBIfam" id="TIGR01179">
    <property type="entry name" value="galE"/>
    <property type="match status" value="1"/>
</dbReference>
<dbReference type="NCBIfam" id="NF007956">
    <property type="entry name" value="PRK10675.1"/>
    <property type="match status" value="1"/>
</dbReference>
<dbReference type="PANTHER" id="PTHR43725">
    <property type="entry name" value="UDP-GLUCOSE 4-EPIMERASE"/>
    <property type="match status" value="1"/>
</dbReference>
<dbReference type="PANTHER" id="PTHR43725:SF47">
    <property type="entry name" value="UDP-GLUCOSE 4-EPIMERASE"/>
    <property type="match status" value="1"/>
</dbReference>
<dbReference type="Pfam" id="PF16363">
    <property type="entry name" value="GDP_Man_Dehyd"/>
    <property type="match status" value="1"/>
</dbReference>
<dbReference type="PRINTS" id="PR01713">
    <property type="entry name" value="NUCEPIMERASE"/>
</dbReference>
<dbReference type="SUPFAM" id="SSF51735">
    <property type="entry name" value="NAD(P)-binding Rossmann-fold domains"/>
    <property type="match status" value="1"/>
</dbReference>
<keyword id="KW-0119">Carbohydrate metabolism</keyword>
<keyword id="KW-0299">Galactose metabolism</keyword>
<keyword id="KW-0413">Isomerase</keyword>
<keyword id="KW-0520">NAD</keyword>
<keyword id="KW-1185">Reference proteome</keyword>
<organism>
    <name type="scientific">Pongo abelii</name>
    <name type="common">Sumatran orangutan</name>
    <name type="synonym">Pongo pygmaeus abelii</name>
    <dbReference type="NCBI Taxonomy" id="9601"/>
    <lineage>
        <taxon>Eukaryota</taxon>
        <taxon>Metazoa</taxon>
        <taxon>Chordata</taxon>
        <taxon>Craniata</taxon>
        <taxon>Vertebrata</taxon>
        <taxon>Euteleostomi</taxon>
        <taxon>Mammalia</taxon>
        <taxon>Eutheria</taxon>
        <taxon>Euarchontoglires</taxon>
        <taxon>Primates</taxon>
        <taxon>Haplorrhini</taxon>
        <taxon>Catarrhini</taxon>
        <taxon>Hominidae</taxon>
        <taxon>Pongo</taxon>
    </lineage>
</organism>
<name>GALE_PONAB</name>
<comment type="function">
    <text evidence="1">Catalyzes two distinct but analogous reactions: the reversible epimerization of UDP-glucose to UDP-galactose and the reversible epimerization of UDP-N-acetylglucosamine to UDP-N-acetylgalactosamine. The reaction with UDP-Gal plays a critical role in the Leloir pathway of galactose catabolism in which galactose is converted to the glycolytic intermediate glucose 6-phosphate. It contributes to the catabolism of dietary galactose and enables the endogenous biosynthesis of both UDP-Gal and UDP-GalNAc when exogenous sources are limited. Both UDP-sugar interconversions are important in the synthesis of glycoproteins and glycolipids.</text>
</comment>
<comment type="catalytic activity">
    <reaction evidence="1">
        <text>UDP-alpha-D-glucose = UDP-alpha-D-galactose</text>
        <dbReference type="Rhea" id="RHEA:22168"/>
        <dbReference type="ChEBI" id="CHEBI:58885"/>
        <dbReference type="ChEBI" id="CHEBI:66914"/>
        <dbReference type="EC" id="5.1.3.2"/>
    </reaction>
</comment>
<comment type="catalytic activity">
    <reaction evidence="1">
        <text>UDP-N-acetyl-alpha-D-glucosamine = UDP-N-acetyl-alpha-D-galactosamine</text>
        <dbReference type="Rhea" id="RHEA:20517"/>
        <dbReference type="ChEBI" id="CHEBI:57705"/>
        <dbReference type="ChEBI" id="CHEBI:67138"/>
        <dbReference type="EC" id="5.1.3.7"/>
    </reaction>
</comment>
<comment type="cofactor">
    <cofactor evidence="1">
        <name>NAD(+)</name>
        <dbReference type="ChEBI" id="CHEBI:57540"/>
    </cofactor>
</comment>
<comment type="pathway">
    <text>Carbohydrate metabolism; galactose metabolism.</text>
</comment>
<comment type="subunit">
    <text evidence="1">Homodimer.</text>
</comment>
<comment type="similarity">
    <text evidence="2">Belongs to the NAD(P)-dependent epimerase/dehydratase family.</text>
</comment>
<gene>
    <name type="primary">GALE</name>
</gene>
<feature type="chain" id="PRO_0000290018" description="UDP-glucose 4-epimerase">
    <location>
        <begin position="1"/>
        <end position="348"/>
    </location>
</feature>
<feature type="active site" description="Proton acceptor" evidence="1">
    <location>
        <position position="157"/>
    </location>
</feature>
<feature type="binding site" evidence="1">
    <location>
        <begin position="12"/>
        <end position="14"/>
    </location>
    <ligand>
        <name>NAD(+)</name>
        <dbReference type="ChEBI" id="CHEBI:57540"/>
    </ligand>
</feature>
<feature type="binding site" evidence="1">
    <location>
        <begin position="33"/>
        <end position="37"/>
    </location>
    <ligand>
        <name>NAD(+)</name>
        <dbReference type="ChEBI" id="CHEBI:57540"/>
    </ligand>
</feature>
<feature type="binding site" evidence="1">
    <location>
        <begin position="66"/>
        <end position="67"/>
    </location>
    <ligand>
        <name>NAD(+)</name>
        <dbReference type="ChEBI" id="CHEBI:57540"/>
    </ligand>
</feature>
<feature type="binding site" evidence="1">
    <location>
        <position position="88"/>
    </location>
    <ligand>
        <name>NAD(+)</name>
        <dbReference type="ChEBI" id="CHEBI:57540"/>
    </ligand>
</feature>
<feature type="binding site" evidence="1">
    <location>
        <position position="92"/>
    </location>
    <ligand>
        <name>NAD(+)</name>
        <dbReference type="ChEBI" id="CHEBI:57540"/>
    </ligand>
</feature>
<feature type="binding site" evidence="1">
    <location>
        <begin position="132"/>
        <end position="134"/>
    </location>
    <ligand>
        <name>substrate</name>
    </ligand>
</feature>
<feature type="binding site" evidence="1">
    <location>
        <position position="161"/>
    </location>
    <ligand>
        <name>NAD(+)</name>
        <dbReference type="ChEBI" id="CHEBI:57540"/>
    </ligand>
</feature>
<feature type="binding site" evidence="1">
    <location>
        <begin position="185"/>
        <end position="187"/>
    </location>
    <ligand>
        <name>substrate</name>
    </ligand>
</feature>
<feature type="binding site" evidence="1">
    <location>
        <position position="185"/>
    </location>
    <ligand>
        <name>NAD(+)</name>
        <dbReference type="ChEBI" id="CHEBI:57540"/>
    </ligand>
</feature>
<feature type="binding site" evidence="1">
    <location>
        <begin position="206"/>
        <end position="208"/>
    </location>
    <ligand>
        <name>substrate</name>
    </ligand>
</feature>
<feature type="binding site" evidence="1">
    <location>
        <begin position="224"/>
        <end position="226"/>
    </location>
    <ligand>
        <name>substrate</name>
    </ligand>
</feature>
<feature type="binding site" evidence="1">
    <location>
        <position position="239"/>
    </location>
    <ligand>
        <name>substrate</name>
    </ligand>
</feature>
<feature type="binding site" evidence="1">
    <location>
        <begin position="300"/>
        <end position="303"/>
    </location>
    <ligand>
        <name>substrate</name>
    </ligand>
</feature>
<evidence type="ECO:0000250" key="1">
    <source>
        <dbReference type="UniProtKB" id="Q14376"/>
    </source>
</evidence>
<evidence type="ECO:0000305" key="2"/>
<protein>
    <recommendedName>
        <fullName evidence="1">UDP-glucose 4-epimerase</fullName>
        <ecNumber evidence="1">5.1.3.2</ecNumber>
    </recommendedName>
    <alternativeName>
        <fullName evidence="1">Galactowaldenase</fullName>
    </alternativeName>
    <alternativeName>
        <fullName evidence="1">UDP-N-acetylglucosamine 4-epimerase</fullName>
        <shortName evidence="1">UDP-GlcNAc 4-epimerase</shortName>
        <ecNumber evidence="1">5.1.3.7</ecNumber>
    </alternativeName>
    <alternativeName>
        <fullName evidence="1">UDP-galactosamine 4-epimerase</fullName>
        <shortName evidence="1">UDP-GalNAc 4-epimerase</shortName>
    </alternativeName>
    <alternativeName>
        <fullName evidence="1">UDP-galactose 4-epimerase</fullName>
    </alternativeName>
</protein>